<dbReference type="EC" id="2.1.1.199" evidence="1"/>
<dbReference type="EMBL" id="CP000423">
    <property type="protein sequence ID" value="ABJ70050.1"/>
    <property type="molecule type" value="Genomic_DNA"/>
</dbReference>
<dbReference type="RefSeq" id="WP_011674449.1">
    <property type="nucleotide sequence ID" value="NC_008526.1"/>
</dbReference>
<dbReference type="RefSeq" id="YP_806492.1">
    <property type="nucleotide sequence ID" value="NC_008526.1"/>
</dbReference>
<dbReference type="SMR" id="Q039S2"/>
<dbReference type="STRING" id="321967.LSEI_1267"/>
<dbReference type="PaxDb" id="321967-LSEI_1267"/>
<dbReference type="KEGG" id="lca:LSEI_1267"/>
<dbReference type="PATRIC" id="fig|321967.11.peg.1243"/>
<dbReference type="HOGENOM" id="CLU_038422_2_0_9"/>
<dbReference type="Proteomes" id="UP000001651">
    <property type="component" value="Chromosome"/>
</dbReference>
<dbReference type="GO" id="GO:0005737">
    <property type="term" value="C:cytoplasm"/>
    <property type="evidence" value="ECO:0007669"/>
    <property type="project" value="UniProtKB-SubCell"/>
</dbReference>
<dbReference type="GO" id="GO:0071424">
    <property type="term" value="F:rRNA (cytosine-N4-)-methyltransferase activity"/>
    <property type="evidence" value="ECO:0007669"/>
    <property type="project" value="UniProtKB-UniRule"/>
</dbReference>
<dbReference type="GO" id="GO:0070475">
    <property type="term" value="P:rRNA base methylation"/>
    <property type="evidence" value="ECO:0007669"/>
    <property type="project" value="UniProtKB-UniRule"/>
</dbReference>
<dbReference type="FunFam" id="1.10.150.170:FF:000001">
    <property type="entry name" value="Ribosomal RNA small subunit methyltransferase H"/>
    <property type="match status" value="1"/>
</dbReference>
<dbReference type="Gene3D" id="1.10.150.170">
    <property type="entry name" value="Putative methyltransferase TM0872, insert domain"/>
    <property type="match status" value="1"/>
</dbReference>
<dbReference type="Gene3D" id="3.40.50.150">
    <property type="entry name" value="Vaccinia Virus protein VP39"/>
    <property type="match status" value="1"/>
</dbReference>
<dbReference type="HAMAP" id="MF_01007">
    <property type="entry name" value="16SrRNA_methyltr_H"/>
    <property type="match status" value="1"/>
</dbReference>
<dbReference type="InterPro" id="IPR002903">
    <property type="entry name" value="RsmH"/>
</dbReference>
<dbReference type="InterPro" id="IPR023397">
    <property type="entry name" value="SAM-dep_MeTrfase_MraW_recog"/>
</dbReference>
<dbReference type="InterPro" id="IPR029063">
    <property type="entry name" value="SAM-dependent_MTases_sf"/>
</dbReference>
<dbReference type="NCBIfam" id="TIGR00006">
    <property type="entry name" value="16S rRNA (cytosine(1402)-N(4))-methyltransferase RsmH"/>
    <property type="match status" value="1"/>
</dbReference>
<dbReference type="PANTHER" id="PTHR11265:SF0">
    <property type="entry name" value="12S RRNA N4-METHYLCYTIDINE METHYLTRANSFERASE"/>
    <property type="match status" value="1"/>
</dbReference>
<dbReference type="PANTHER" id="PTHR11265">
    <property type="entry name" value="S-ADENOSYL-METHYLTRANSFERASE MRAW"/>
    <property type="match status" value="1"/>
</dbReference>
<dbReference type="Pfam" id="PF01795">
    <property type="entry name" value="Methyltransf_5"/>
    <property type="match status" value="1"/>
</dbReference>
<dbReference type="PIRSF" id="PIRSF004486">
    <property type="entry name" value="MraW"/>
    <property type="match status" value="1"/>
</dbReference>
<dbReference type="SUPFAM" id="SSF81799">
    <property type="entry name" value="Putative methyltransferase TM0872, insert domain"/>
    <property type="match status" value="1"/>
</dbReference>
<dbReference type="SUPFAM" id="SSF53335">
    <property type="entry name" value="S-adenosyl-L-methionine-dependent methyltransferases"/>
    <property type="match status" value="1"/>
</dbReference>
<comment type="function">
    <text evidence="1">Specifically methylates the N4 position of cytidine in position 1402 (C1402) of 16S rRNA.</text>
</comment>
<comment type="catalytic activity">
    <reaction evidence="1">
        <text>cytidine(1402) in 16S rRNA + S-adenosyl-L-methionine = N(4)-methylcytidine(1402) in 16S rRNA + S-adenosyl-L-homocysteine + H(+)</text>
        <dbReference type="Rhea" id="RHEA:42928"/>
        <dbReference type="Rhea" id="RHEA-COMP:10286"/>
        <dbReference type="Rhea" id="RHEA-COMP:10287"/>
        <dbReference type="ChEBI" id="CHEBI:15378"/>
        <dbReference type="ChEBI" id="CHEBI:57856"/>
        <dbReference type="ChEBI" id="CHEBI:59789"/>
        <dbReference type="ChEBI" id="CHEBI:74506"/>
        <dbReference type="ChEBI" id="CHEBI:82748"/>
        <dbReference type="EC" id="2.1.1.199"/>
    </reaction>
</comment>
<comment type="subcellular location">
    <subcellularLocation>
        <location evidence="1">Cytoplasm</location>
    </subcellularLocation>
</comment>
<comment type="similarity">
    <text evidence="1">Belongs to the methyltransferase superfamily. RsmH family.</text>
</comment>
<sequence>MTEFKHETVLLKEATAALAVKPAGTYVDATLGRGGHTRQILNHLTTGRLIAFDQDEAAIATVTADFGTLPKQLTLVHRNFRDLTDALTTLGITEVDGILYDLGVSSPQFDDSKRGFSYRFDAPLDMRMDQRQTLDAKTIVNEWPYADLVRIFSRYGEEHFSKQIARRIEQARTVQPITTTFQLVELIKAGIPAKARRTGGHPAKKVFQAIRIAVNDELSALESSLEQALKLINVGGRISVITFQSLEDRLVKTMFKEVSSVQDVPRGLPVIPASAQPNYRLVNRKPILPSEEELAVNHRAHSAKLRVIEKIHD</sequence>
<organism>
    <name type="scientific">Lacticaseibacillus paracasei (strain ATCC 334 / BCRC 17002 / CCUG 31169 / CIP 107868 / KCTC 3260 / NRRL B-441)</name>
    <name type="common">Lactobacillus paracasei</name>
    <dbReference type="NCBI Taxonomy" id="321967"/>
    <lineage>
        <taxon>Bacteria</taxon>
        <taxon>Bacillati</taxon>
        <taxon>Bacillota</taxon>
        <taxon>Bacilli</taxon>
        <taxon>Lactobacillales</taxon>
        <taxon>Lactobacillaceae</taxon>
        <taxon>Lacticaseibacillus</taxon>
    </lineage>
</organism>
<feature type="chain" id="PRO_0000386940" description="Ribosomal RNA small subunit methyltransferase H">
    <location>
        <begin position="1"/>
        <end position="313"/>
    </location>
</feature>
<feature type="binding site" evidence="1">
    <location>
        <begin position="34"/>
        <end position="36"/>
    </location>
    <ligand>
        <name>S-adenosyl-L-methionine</name>
        <dbReference type="ChEBI" id="CHEBI:59789"/>
    </ligand>
</feature>
<feature type="binding site" evidence="1">
    <location>
        <position position="53"/>
    </location>
    <ligand>
        <name>S-adenosyl-L-methionine</name>
        <dbReference type="ChEBI" id="CHEBI:59789"/>
    </ligand>
</feature>
<feature type="binding site" evidence="1">
    <location>
        <position position="80"/>
    </location>
    <ligand>
        <name>S-adenosyl-L-methionine</name>
        <dbReference type="ChEBI" id="CHEBI:59789"/>
    </ligand>
</feature>
<feature type="binding site" evidence="1">
    <location>
        <position position="101"/>
    </location>
    <ligand>
        <name>S-adenosyl-L-methionine</name>
        <dbReference type="ChEBI" id="CHEBI:59789"/>
    </ligand>
</feature>
<feature type="binding site" evidence="1">
    <location>
        <position position="108"/>
    </location>
    <ligand>
        <name>S-adenosyl-L-methionine</name>
        <dbReference type="ChEBI" id="CHEBI:59789"/>
    </ligand>
</feature>
<keyword id="KW-0963">Cytoplasm</keyword>
<keyword id="KW-0489">Methyltransferase</keyword>
<keyword id="KW-1185">Reference proteome</keyword>
<keyword id="KW-0698">rRNA processing</keyword>
<keyword id="KW-0949">S-adenosyl-L-methionine</keyword>
<keyword id="KW-0808">Transferase</keyword>
<name>RSMH_LACP3</name>
<gene>
    <name evidence="1" type="primary">rsmH</name>
    <name type="synonym">mraW</name>
    <name type="ordered locus">LSEI_1267</name>
</gene>
<evidence type="ECO:0000255" key="1">
    <source>
        <dbReference type="HAMAP-Rule" id="MF_01007"/>
    </source>
</evidence>
<accession>Q039S2</accession>
<protein>
    <recommendedName>
        <fullName evidence="1">Ribosomal RNA small subunit methyltransferase H</fullName>
        <ecNumber evidence="1">2.1.1.199</ecNumber>
    </recommendedName>
    <alternativeName>
        <fullName evidence="1">16S rRNA m(4)C1402 methyltransferase</fullName>
    </alternativeName>
    <alternativeName>
        <fullName evidence="1">rRNA (cytosine-N(4)-)-methyltransferase RsmH</fullName>
    </alternativeName>
</protein>
<reference key="1">
    <citation type="journal article" date="2006" name="Proc. Natl. Acad. Sci. U.S.A.">
        <title>Comparative genomics of the lactic acid bacteria.</title>
        <authorList>
            <person name="Makarova K.S."/>
            <person name="Slesarev A."/>
            <person name="Wolf Y.I."/>
            <person name="Sorokin A."/>
            <person name="Mirkin B."/>
            <person name="Koonin E.V."/>
            <person name="Pavlov A."/>
            <person name="Pavlova N."/>
            <person name="Karamychev V."/>
            <person name="Polouchine N."/>
            <person name="Shakhova V."/>
            <person name="Grigoriev I."/>
            <person name="Lou Y."/>
            <person name="Rohksar D."/>
            <person name="Lucas S."/>
            <person name="Huang K."/>
            <person name="Goodstein D.M."/>
            <person name="Hawkins T."/>
            <person name="Plengvidhya V."/>
            <person name="Welker D."/>
            <person name="Hughes J."/>
            <person name="Goh Y."/>
            <person name="Benson A."/>
            <person name="Baldwin K."/>
            <person name="Lee J.-H."/>
            <person name="Diaz-Muniz I."/>
            <person name="Dosti B."/>
            <person name="Smeianov V."/>
            <person name="Wechter W."/>
            <person name="Barabote R."/>
            <person name="Lorca G."/>
            <person name="Altermann E."/>
            <person name="Barrangou R."/>
            <person name="Ganesan B."/>
            <person name="Xie Y."/>
            <person name="Rawsthorne H."/>
            <person name="Tamir D."/>
            <person name="Parker C."/>
            <person name="Breidt F."/>
            <person name="Broadbent J.R."/>
            <person name="Hutkins R."/>
            <person name="O'Sullivan D."/>
            <person name="Steele J."/>
            <person name="Unlu G."/>
            <person name="Saier M.H. Jr."/>
            <person name="Klaenhammer T."/>
            <person name="Richardson P."/>
            <person name="Kozyavkin S."/>
            <person name="Weimer B.C."/>
            <person name="Mills D.A."/>
        </authorList>
    </citation>
    <scope>NUCLEOTIDE SEQUENCE [LARGE SCALE GENOMIC DNA]</scope>
    <source>
        <strain>ATCC 334 / BCRC 17002 / CCUG 31169 / CIP 107868 / KCTC 3260 / NRRL B-441</strain>
    </source>
</reference>
<proteinExistence type="inferred from homology"/>